<sequence length="595" mass="66925">MNEDVLRSSHLPIKLAALHFLDLPLSVYYSLPQVSLSTGTKKLFAATAFGAVSLIIIARRFRRRKGRRKANSPVEQETFEFLTTIHLSKESDSQSVPQNSENPYTCNVVSGALYNKLSGSLPSLVSVRSRHSSSSSTCANGSNCWEEAGDAADVCNLLSLPVATPENLYLMGMELFEEALRRWEQALTFRSRQAEDEGSCVSVKLGAGDAIAEESMEDIISADFIQKLESLLQRAYRLQEEFEGSLGVTDPTTHPTNVLLADKHMDLSVREELEDTCLRDSISIASTDSFVSAAELSEHREMRSGHALGSLSPHPFYEDALQMAEEGKISCRVLRTEMLECLGDADFLAKLHCVRQACQVILCERATRAFLADTGKRILSAIIAKARKSPKRFEEVFEEMISFLEHTDHWENTENELSSRGVKHMNFYDVVLDFILMDSFEDLENPPLSIQTVVNNRWLSNSFKETAVASSCWSVLKQKRQHMKVQDGFIAHFYAVCEHISPVLAWGFLGPKCTLQDFCCFFKEQVLFFLKDIFDLDKVRYFSLETLAEDILHLLHRRSDLLMAYLATDVIHHLNGCSDTSVHLVHSALLEAQVQ</sequence>
<evidence type="ECO:0000250" key="1">
    <source>
        <dbReference type="UniProtKB" id="Q8NAN2"/>
    </source>
</evidence>
<evidence type="ECO:0000255" key="2"/>
<evidence type="ECO:0000303" key="3">
    <source ref="1"/>
</evidence>
<evidence type="ECO:0000305" key="4"/>
<gene>
    <name evidence="1" type="primary">miga1</name>
    <name evidence="1" type="synonym">fam73a</name>
    <name evidence="3" type="ORF">zgc:101625</name>
</gene>
<organism>
    <name type="scientific">Danio rerio</name>
    <name type="common">Zebrafish</name>
    <name type="synonym">Brachydanio rerio</name>
    <dbReference type="NCBI Taxonomy" id="7955"/>
    <lineage>
        <taxon>Eukaryota</taxon>
        <taxon>Metazoa</taxon>
        <taxon>Chordata</taxon>
        <taxon>Craniata</taxon>
        <taxon>Vertebrata</taxon>
        <taxon>Euteleostomi</taxon>
        <taxon>Actinopterygii</taxon>
        <taxon>Neopterygii</taxon>
        <taxon>Teleostei</taxon>
        <taxon>Ostariophysi</taxon>
        <taxon>Cypriniformes</taxon>
        <taxon>Danionidae</taxon>
        <taxon>Danioninae</taxon>
        <taxon>Danio</taxon>
    </lineage>
</organism>
<reference key="1">
    <citation type="submission" date="2004-10" db="EMBL/GenBank/DDBJ databases">
        <authorList>
            <consortium name="NIH - Zebrafish Gene Collection (ZGC) project"/>
        </authorList>
    </citation>
    <scope>NUCLEOTIDE SEQUENCE [LARGE SCALE MRNA]</scope>
    <source>
        <tissue>Embryo</tissue>
    </source>
</reference>
<dbReference type="EMBL" id="BC083228">
    <property type="protein sequence ID" value="AAH83228.1"/>
    <property type="molecule type" value="mRNA"/>
</dbReference>
<dbReference type="RefSeq" id="NP_001006090.1">
    <property type="nucleotide sequence ID" value="NM_001006090.1"/>
</dbReference>
<dbReference type="SMR" id="Q5XJS0"/>
<dbReference type="FunCoup" id="Q5XJS0">
    <property type="interactions" value="1299"/>
</dbReference>
<dbReference type="STRING" id="7955.ENSDARP00000027051"/>
<dbReference type="PaxDb" id="7955-ENSDARP00000027051"/>
<dbReference type="GeneID" id="450070"/>
<dbReference type="KEGG" id="dre:450070"/>
<dbReference type="AGR" id="ZFIN:ZDB-GENE-041010-193"/>
<dbReference type="CTD" id="374986"/>
<dbReference type="ZFIN" id="ZDB-GENE-041010-193">
    <property type="gene designation" value="miga1"/>
</dbReference>
<dbReference type="eggNOG" id="KOG3831">
    <property type="taxonomic scope" value="Eukaryota"/>
</dbReference>
<dbReference type="InParanoid" id="Q5XJS0"/>
<dbReference type="OrthoDB" id="8880065at2759"/>
<dbReference type="PhylomeDB" id="Q5XJS0"/>
<dbReference type="Reactome" id="R-DRE-1483166">
    <property type="pathway name" value="Synthesis of PA"/>
</dbReference>
<dbReference type="PRO" id="PR:Q5XJS0"/>
<dbReference type="Proteomes" id="UP000000437">
    <property type="component" value="Chromosome 2"/>
</dbReference>
<dbReference type="GO" id="GO:0005741">
    <property type="term" value="C:mitochondrial outer membrane"/>
    <property type="evidence" value="ECO:0007669"/>
    <property type="project" value="UniProtKB-SubCell"/>
</dbReference>
<dbReference type="GO" id="GO:0005886">
    <property type="term" value="C:plasma membrane"/>
    <property type="evidence" value="ECO:0000250"/>
    <property type="project" value="UniProtKB"/>
</dbReference>
<dbReference type="GO" id="GO:0046982">
    <property type="term" value="F:protein heterodimerization activity"/>
    <property type="evidence" value="ECO:0000250"/>
    <property type="project" value="UniProtKB"/>
</dbReference>
<dbReference type="GO" id="GO:0042803">
    <property type="term" value="F:protein homodimerization activity"/>
    <property type="evidence" value="ECO:0000250"/>
    <property type="project" value="UniProtKB"/>
</dbReference>
<dbReference type="GO" id="GO:0008053">
    <property type="term" value="P:mitochondrial fusion"/>
    <property type="evidence" value="ECO:0000250"/>
    <property type="project" value="UniProtKB"/>
</dbReference>
<dbReference type="InterPro" id="IPR019392">
    <property type="entry name" value="Miga"/>
</dbReference>
<dbReference type="PANTHER" id="PTHR21508">
    <property type="entry name" value="MITOGUARDIN"/>
    <property type="match status" value="1"/>
</dbReference>
<dbReference type="PANTHER" id="PTHR21508:SF3">
    <property type="entry name" value="MITOGUARDIN 1"/>
    <property type="match status" value="1"/>
</dbReference>
<dbReference type="Pfam" id="PF10265">
    <property type="entry name" value="Miga"/>
    <property type="match status" value="1"/>
</dbReference>
<proteinExistence type="evidence at transcript level"/>
<accession>Q5XJS0</accession>
<feature type="chain" id="PRO_0000285648" description="Mitoguardin 1">
    <location>
        <begin position="1"/>
        <end position="595"/>
    </location>
</feature>
<feature type="transmembrane region" description="Helical" evidence="2">
    <location>
        <begin position="11"/>
        <end position="31"/>
    </location>
</feature>
<feature type="transmembrane region" description="Helical" evidence="2">
    <location>
        <begin position="38"/>
        <end position="58"/>
    </location>
</feature>
<comment type="function">
    <text evidence="1">Regulator of mitochondrial fusion: acts by forming homo- and heterodimers at the mitochondrial outer membrane and facilitating the formation of pld6/MitoPLD dimers. May act by regulating phospholipid metabolism via pld6/MitoPLD.</text>
</comment>
<comment type="subunit">
    <text evidence="1">Homodimer and heterodimer; forms heterodimers with miga2.</text>
</comment>
<comment type="subcellular location">
    <subcellularLocation>
        <location evidence="1">Mitochondrion outer membrane</location>
        <topology evidence="2">Multi-pass membrane protein</topology>
    </subcellularLocation>
</comment>
<comment type="similarity">
    <text evidence="4">Belongs to the mitoguardin family.</text>
</comment>
<keyword id="KW-0472">Membrane</keyword>
<keyword id="KW-0496">Mitochondrion</keyword>
<keyword id="KW-1000">Mitochondrion outer membrane</keyword>
<keyword id="KW-1185">Reference proteome</keyword>
<keyword id="KW-0812">Transmembrane</keyword>
<keyword id="KW-1133">Transmembrane helix</keyword>
<name>MIGA1_DANRE</name>
<protein>
    <recommendedName>
        <fullName evidence="1">Mitoguardin 1</fullName>
    </recommendedName>
    <alternativeName>
        <fullName evidence="4">Protein FAM73A</fullName>
    </alternativeName>
</protein>